<proteinExistence type="evidence at protein level"/>
<protein>
    <recommendedName>
        <fullName>Peptide BmKb1</fullName>
    </recommendedName>
    <alternativeName>
        <fullName>Antimicrobial peptide-like protein</fullName>
    </alternativeName>
    <alternativeName>
        <fullName>BmKb1'</fullName>
    </alternativeName>
    <alternativeName>
        <fullName>BmKb1*</fullName>
    </alternativeName>
    <alternativeName>
        <fullName evidence="4">Non-disulfide-bridged peptide 4.2</fullName>
        <shortName evidence="4">NDBP-4.2</shortName>
    </alternativeName>
    <alternativeName>
        <fullName evidence="5">Non-disulfide-bridged peptide 4.3</fullName>
        <shortName evidence="5">NDBP-4.3</shortName>
    </alternativeName>
    <alternativeName>
        <fullName>Toxin peptide 6</fullName>
    </alternativeName>
</protein>
<keyword id="KW-0027">Amidation</keyword>
<keyword id="KW-0044">Antibiotic</keyword>
<keyword id="KW-0929">Antimicrobial</keyword>
<keyword id="KW-0165">Cleavage on pair of basic residues</keyword>
<keyword id="KW-0472">Membrane</keyword>
<keyword id="KW-0964">Secreted</keyword>
<keyword id="KW-0732">Signal</keyword>
<keyword id="KW-1052">Target cell membrane</keyword>
<keyword id="KW-1053">Target membrane</keyword>
<keyword id="KW-0812">Transmembrane</keyword>
<sequence length="74" mass="8616">MEIKYLLTVFLVLLIVSDHCQAFLFSLIPSAISGLISAFKGRRKRDLNGYIDHFKNFRKRDAELEELLSKLPIY</sequence>
<organism>
    <name type="scientific">Olivierus martensii</name>
    <name type="common">Manchurian scorpion</name>
    <name type="synonym">Mesobuthus martensii</name>
    <dbReference type="NCBI Taxonomy" id="34649"/>
    <lineage>
        <taxon>Eukaryota</taxon>
        <taxon>Metazoa</taxon>
        <taxon>Ecdysozoa</taxon>
        <taxon>Arthropoda</taxon>
        <taxon>Chelicerata</taxon>
        <taxon>Arachnida</taxon>
        <taxon>Scorpiones</taxon>
        <taxon>Buthida</taxon>
        <taxon>Buthoidea</taxon>
        <taxon>Buthidae</taxon>
        <taxon>Olivierus</taxon>
    </lineage>
</organism>
<accession>Q718F4</accession>
<accession>Q2M5D6</accession>
<accession>Q95P85</accession>
<reference key="1">
    <citation type="journal article" date="2004" name="Peptides">
        <title>Identification and functional characterization of novel scorpion venom peptides with no disulfide bridge from Buthus martensii Karsch.</title>
        <authorList>
            <person name="Zeng X.-C."/>
            <person name="Wang S.-X."/>
            <person name="Zhu Y."/>
            <person name="Zhu S.-Y."/>
            <person name="Li W.-X."/>
        </authorList>
    </citation>
    <scope>NUCLEOTIDE SEQUENCE [MRNA]</scope>
    <scope>SYNTHESIS OF 24-40</scope>
    <scope>AMIDATION AT LYS-40</scope>
    <scope>FUNCTION</scope>
    <source>
        <tissue>Venom gland</tissue>
    </source>
</reference>
<reference key="2">
    <citation type="journal article" date="2005" name="Peptides">
        <title>Genomic organization of four novel nondisulfide-bridged peptides from scorpion Mesobuthus martensii Karsch: gaining insight into evolutionary mechanism.</title>
        <authorList>
            <person name="Luo F."/>
            <person name="Zeng X.-C."/>
            <person name="Hahin R."/>
            <person name="Cao Z.-J."/>
            <person name="Liu H."/>
            <person name="Li W.-X."/>
        </authorList>
    </citation>
    <scope>NUCLEOTIDE SEQUENCE [GENOMIC DNA]</scope>
</reference>
<reference key="3">
    <citation type="journal article" date="2005" name="IUBMB Life">
        <title>Scorpion venom peptides without disulfide bridges.</title>
        <authorList>
            <person name="Zeng X.C."/>
            <person name="Corzo G."/>
            <person name="Hahin R."/>
        </authorList>
    </citation>
    <scope>NOMENCLATURE</scope>
</reference>
<reference key="4">
    <citation type="journal article" date="2014" name="Peptides">
        <title>Scorpion venom peptides with no disulfide bridges: a review.</title>
        <authorList>
            <person name="Almaaytah A."/>
            <person name="Albalas Q."/>
        </authorList>
    </citation>
    <scope>NOMENCLATURE</scope>
</reference>
<comment type="function">
    <text evidence="3">Has antibacterial activity against Gram-positive bacteria S.aureus, M.luteus, B.subtilis, and Gram-negative bacteria E.coli, and P.aeruginosa.</text>
</comment>
<comment type="subcellular location">
    <subcellularLocation>
        <location evidence="1">Secreted</location>
    </subcellularLocation>
    <subcellularLocation>
        <location evidence="1">Target cell membrane</location>
    </subcellularLocation>
    <text evidence="1">Forms a helical membrane channel in the prey.</text>
</comment>
<comment type="tissue specificity">
    <text evidence="6">Expressed by the venom gland.</text>
</comment>
<comment type="similarity">
    <text evidence="6">Belongs to the non-disulfide-bridged peptide (NDBP) superfamily. Short antimicrobial peptide (group 4) family.</text>
</comment>
<comment type="sequence caution" evidence="6">
    <conflict type="erroneous termination">
        <sequence resource="EMBL-CDS" id="AAK61826"/>
    </conflict>
    <text>Truncated C-terminus.</text>
</comment>
<name>NDB43_OLIMR</name>
<evidence type="ECO:0000250" key="1"/>
<evidence type="ECO:0000255" key="2"/>
<evidence type="ECO:0000269" key="3">
    <source>
    </source>
</evidence>
<evidence type="ECO:0000303" key="4">
    <source>
    </source>
</evidence>
<evidence type="ECO:0000303" key="5">
    <source>
    </source>
</evidence>
<evidence type="ECO:0000305" key="6"/>
<feature type="signal peptide" evidence="2">
    <location>
        <begin position="1"/>
        <end position="22"/>
    </location>
</feature>
<feature type="peptide" id="PRO_0000231496" description="Peptide BmKb1">
    <location>
        <begin position="23"/>
        <end position="40"/>
    </location>
</feature>
<feature type="propeptide" id="PRO_0000231497" evidence="1">
    <location>
        <begin position="46"/>
        <end position="74"/>
    </location>
</feature>
<feature type="modified residue" description="Lysine amide" evidence="3">
    <location>
        <position position="40"/>
    </location>
</feature>
<feature type="sequence conflict" description="In Ref. 1; AAK61826." evidence="6" ref="1">
    <location>
        <begin position="50"/>
        <end position="74"/>
    </location>
</feature>
<feature type="sequence conflict" description="In Ref. 2; AAW23032." evidence="6" ref="2">
    <original>Y</original>
    <variation>Q</variation>
    <location>
        <position position="50"/>
    </location>
</feature>
<dbReference type="EMBL" id="AF543048">
    <property type="protein sequence ID" value="AAQ11422.1"/>
    <property type="molecule type" value="mRNA"/>
</dbReference>
<dbReference type="EMBL" id="AF159979">
    <property type="protein sequence ID" value="AAK61826.1"/>
    <property type="status" value="ALT_SEQ"/>
    <property type="molecule type" value="mRNA"/>
</dbReference>
<dbReference type="EMBL" id="AY700566">
    <property type="protein sequence ID" value="AAW23032.1"/>
    <property type="molecule type" value="Genomic_DNA"/>
</dbReference>
<dbReference type="GO" id="GO:0005576">
    <property type="term" value="C:extracellular region"/>
    <property type="evidence" value="ECO:0007669"/>
    <property type="project" value="UniProtKB-SubCell"/>
</dbReference>
<dbReference type="GO" id="GO:0016020">
    <property type="term" value="C:membrane"/>
    <property type="evidence" value="ECO:0007669"/>
    <property type="project" value="UniProtKB-KW"/>
</dbReference>
<dbReference type="GO" id="GO:0044218">
    <property type="term" value="C:other organism cell membrane"/>
    <property type="evidence" value="ECO:0007669"/>
    <property type="project" value="UniProtKB-KW"/>
</dbReference>
<dbReference type="GO" id="GO:0042742">
    <property type="term" value="P:defense response to bacterium"/>
    <property type="evidence" value="ECO:0007669"/>
    <property type="project" value="UniProtKB-KW"/>
</dbReference>